<reference key="1">
    <citation type="journal article" date="2005" name="Nature">
        <title>The DNA sequence of the human X chromosome.</title>
        <authorList>
            <person name="Ross M.T."/>
            <person name="Grafham D.V."/>
            <person name="Coffey A.J."/>
            <person name="Scherer S."/>
            <person name="McLay K."/>
            <person name="Muzny D."/>
            <person name="Platzer M."/>
            <person name="Howell G.R."/>
            <person name="Burrows C."/>
            <person name="Bird C.P."/>
            <person name="Frankish A."/>
            <person name="Lovell F.L."/>
            <person name="Howe K.L."/>
            <person name="Ashurst J.L."/>
            <person name="Fulton R.S."/>
            <person name="Sudbrak R."/>
            <person name="Wen G."/>
            <person name="Jones M.C."/>
            <person name="Hurles M.E."/>
            <person name="Andrews T.D."/>
            <person name="Scott C.E."/>
            <person name="Searle S."/>
            <person name="Ramser J."/>
            <person name="Whittaker A."/>
            <person name="Deadman R."/>
            <person name="Carter N.P."/>
            <person name="Hunt S.E."/>
            <person name="Chen R."/>
            <person name="Cree A."/>
            <person name="Gunaratne P."/>
            <person name="Havlak P."/>
            <person name="Hodgson A."/>
            <person name="Metzker M.L."/>
            <person name="Richards S."/>
            <person name="Scott G."/>
            <person name="Steffen D."/>
            <person name="Sodergren E."/>
            <person name="Wheeler D.A."/>
            <person name="Worley K.C."/>
            <person name="Ainscough R."/>
            <person name="Ambrose K.D."/>
            <person name="Ansari-Lari M.A."/>
            <person name="Aradhya S."/>
            <person name="Ashwell R.I."/>
            <person name="Babbage A.K."/>
            <person name="Bagguley C.L."/>
            <person name="Ballabio A."/>
            <person name="Banerjee R."/>
            <person name="Barker G.E."/>
            <person name="Barlow K.F."/>
            <person name="Barrett I.P."/>
            <person name="Bates K.N."/>
            <person name="Beare D.M."/>
            <person name="Beasley H."/>
            <person name="Beasley O."/>
            <person name="Beck A."/>
            <person name="Bethel G."/>
            <person name="Blechschmidt K."/>
            <person name="Brady N."/>
            <person name="Bray-Allen S."/>
            <person name="Bridgeman A.M."/>
            <person name="Brown A.J."/>
            <person name="Brown M.J."/>
            <person name="Bonnin D."/>
            <person name="Bruford E.A."/>
            <person name="Buhay C."/>
            <person name="Burch P."/>
            <person name="Burford D."/>
            <person name="Burgess J."/>
            <person name="Burrill W."/>
            <person name="Burton J."/>
            <person name="Bye J.M."/>
            <person name="Carder C."/>
            <person name="Carrel L."/>
            <person name="Chako J."/>
            <person name="Chapman J.C."/>
            <person name="Chavez D."/>
            <person name="Chen E."/>
            <person name="Chen G."/>
            <person name="Chen Y."/>
            <person name="Chen Z."/>
            <person name="Chinault C."/>
            <person name="Ciccodicola A."/>
            <person name="Clark S.Y."/>
            <person name="Clarke G."/>
            <person name="Clee C.M."/>
            <person name="Clegg S."/>
            <person name="Clerc-Blankenburg K."/>
            <person name="Clifford K."/>
            <person name="Cobley V."/>
            <person name="Cole C.G."/>
            <person name="Conquer J.S."/>
            <person name="Corby N."/>
            <person name="Connor R.E."/>
            <person name="David R."/>
            <person name="Davies J."/>
            <person name="Davis C."/>
            <person name="Davis J."/>
            <person name="Delgado O."/>
            <person name="Deshazo D."/>
            <person name="Dhami P."/>
            <person name="Ding Y."/>
            <person name="Dinh H."/>
            <person name="Dodsworth S."/>
            <person name="Draper H."/>
            <person name="Dugan-Rocha S."/>
            <person name="Dunham A."/>
            <person name="Dunn M."/>
            <person name="Durbin K.J."/>
            <person name="Dutta I."/>
            <person name="Eades T."/>
            <person name="Ellwood M."/>
            <person name="Emery-Cohen A."/>
            <person name="Errington H."/>
            <person name="Evans K.L."/>
            <person name="Faulkner L."/>
            <person name="Francis F."/>
            <person name="Frankland J."/>
            <person name="Fraser A.E."/>
            <person name="Galgoczy P."/>
            <person name="Gilbert J."/>
            <person name="Gill R."/>
            <person name="Gloeckner G."/>
            <person name="Gregory S.G."/>
            <person name="Gribble S."/>
            <person name="Griffiths C."/>
            <person name="Grocock R."/>
            <person name="Gu Y."/>
            <person name="Gwilliam R."/>
            <person name="Hamilton C."/>
            <person name="Hart E.A."/>
            <person name="Hawes A."/>
            <person name="Heath P.D."/>
            <person name="Heitmann K."/>
            <person name="Hennig S."/>
            <person name="Hernandez J."/>
            <person name="Hinzmann B."/>
            <person name="Ho S."/>
            <person name="Hoffs M."/>
            <person name="Howden P.J."/>
            <person name="Huckle E.J."/>
            <person name="Hume J."/>
            <person name="Hunt P.J."/>
            <person name="Hunt A.R."/>
            <person name="Isherwood J."/>
            <person name="Jacob L."/>
            <person name="Johnson D."/>
            <person name="Jones S."/>
            <person name="de Jong P.J."/>
            <person name="Joseph S.S."/>
            <person name="Keenan S."/>
            <person name="Kelly S."/>
            <person name="Kershaw J.K."/>
            <person name="Khan Z."/>
            <person name="Kioschis P."/>
            <person name="Klages S."/>
            <person name="Knights A.J."/>
            <person name="Kosiura A."/>
            <person name="Kovar-Smith C."/>
            <person name="Laird G.K."/>
            <person name="Langford C."/>
            <person name="Lawlor S."/>
            <person name="Leversha M."/>
            <person name="Lewis L."/>
            <person name="Liu W."/>
            <person name="Lloyd C."/>
            <person name="Lloyd D.M."/>
            <person name="Loulseged H."/>
            <person name="Loveland J.E."/>
            <person name="Lovell J.D."/>
            <person name="Lozado R."/>
            <person name="Lu J."/>
            <person name="Lyne R."/>
            <person name="Ma J."/>
            <person name="Maheshwari M."/>
            <person name="Matthews L.H."/>
            <person name="McDowall J."/>
            <person name="McLaren S."/>
            <person name="McMurray A."/>
            <person name="Meidl P."/>
            <person name="Meitinger T."/>
            <person name="Milne S."/>
            <person name="Miner G."/>
            <person name="Mistry S.L."/>
            <person name="Morgan M."/>
            <person name="Morris S."/>
            <person name="Mueller I."/>
            <person name="Mullikin J.C."/>
            <person name="Nguyen N."/>
            <person name="Nordsiek G."/>
            <person name="Nyakatura G."/>
            <person name="O'dell C.N."/>
            <person name="Okwuonu G."/>
            <person name="Palmer S."/>
            <person name="Pandian R."/>
            <person name="Parker D."/>
            <person name="Parrish J."/>
            <person name="Pasternak S."/>
            <person name="Patel D."/>
            <person name="Pearce A.V."/>
            <person name="Pearson D.M."/>
            <person name="Pelan S.E."/>
            <person name="Perez L."/>
            <person name="Porter K.M."/>
            <person name="Ramsey Y."/>
            <person name="Reichwald K."/>
            <person name="Rhodes S."/>
            <person name="Ridler K.A."/>
            <person name="Schlessinger D."/>
            <person name="Schueler M.G."/>
            <person name="Sehra H.K."/>
            <person name="Shaw-Smith C."/>
            <person name="Shen H."/>
            <person name="Sheridan E.M."/>
            <person name="Shownkeen R."/>
            <person name="Skuce C.D."/>
            <person name="Smith M.L."/>
            <person name="Sotheran E.C."/>
            <person name="Steingruber H.E."/>
            <person name="Steward C.A."/>
            <person name="Storey R."/>
            <person name="Swann R.M."/>
            <person name="Swarbreck D."/>
            <person name="Tabor P.E."/>
            <person name="Taudien S."/>
            <person name="Taylor T."/>
            <person name="Teague B."/>
            <person name="Thomas K."/>
            <person name="Thorpe A."/>
            <person name="Timms K."/>
            <person name="Tracey A."/>
            <person name="Trevanion S."/>
            <person name="Tromans A.C."/>
            <person name="d'Urso M."/>
            <person name="Verduzco D."/>
            <person name="Villasana D."/>
            <person name="Waldron L."/>
            <person name="Wall M."/>
            <person name="Wang Q."/>
            <person name="Warren J."/>
            <person name="Warry G.L."/>
            <person name="Wei X."/>
            <person name="West A."/>
            <person name="Whitehead S.L."/>
            <person name="Whiteley M.N."/>
            <person name="Wilkinson J.E."/>
            <person name="Willey D.L."/>
            <person name="Williams G."/>
            <person name="Williams L."/>
            <person name="Williamson A."/>
            <person name="Williamson H."/>
            <person name="Wilming L."/>
            <person name="Woodmansey R.L."/>
            <person name="Wray P.W."/>
            <person name="Yen J."/>
            <person name="Zhang J."/>
            <person name="Zhou J."/>
            <person name="Zoghbi H."/>
            <person name="Zorilla S."/>
            <person name="Buck D."/>
            <person name="Reinhardt R."/>
            <person name="Poustka A."/>
            <person name="Rosenthal A."/>
            <person name="Lehrach H."/>
            <person name="Meindl A."/>
            <person name="Minx P.J."/>
            <person name="Hillier L.W."/>
            <person name="Willard H.F."/>
            <person name="Wilson R.K."/>
            <person name="Waterston R.H."/>
            <person name="Rice C.M."/>
            <person name="Vaudin M."/>
            <person name="Coulson A."/>
            <person name="Nelson D.L."/>
            <person name="Weinstock G."/>
            <person name="Sulston J.E."/>
            <person name="Durbin R.M."/>
            <person name="Hubbard T."/>
            <person name="Gibbs R.A."/>
            <person name="Beck S."/>
            <person name="Rogers J."/>
            <person name="Bentley D.R."/>
        </authorList>
    </citation>
    <scope>NUCLEOTIDE SEQUENCE [LARGE SCALE GENOMIC DNA]</scope>
</reference>
<protein>
    <recommendedName>
        <fullName>Putative SNURF-like protein</fullName>
    </recommendedName>
</protein>
<evidence type="ECO:0000305" key="1"/>
<dbReference type="EMBL" id="AL035262">
    <property type="status" value="NOT_ANNOTATED_CDS"/>
    <property type="molecule type" value="Genomic_DNA"/>
</dbReference>
<dbReference type="FunCoup" id="B1AK76">
    <property type="interactions" value="22"/>
</dbReference>
<dbReference type="BioMuta" id="HGNC:29543"/>
<dbReference type="jPOST" id="B1AK76"/>
<dbReference type="MassIVE" id="B1AK76"/>
<dbReference type="AGR" id="HGNC:29543"/>
<dbReference type="GeneCards" id="SNURFL"/>
<dbReference type="HGNC" id="HGNC:29543">
    <property type="gene designation" value="SNURFL"/>
</dbReference>
<dbReference type="neXtProt" id="NX_B1AK76"/>
<dbReference type="InParanoid" id="B1AK76"/>
<dbReference type="PAN-GO" id="B1AK76">
    <property type="GO annotations" value="1 GO annotation based on evolutionary models"/>
</dbReference>
<dbReference type="PhylomeDB" id="B1AK76"/>
<dbReference type="TreeFam" id="TF338383"/>
<dbReference type="Pharos" id="B1AK76">
    <property type="development level" value="Tdark"/>
</dbReference>
<dbReference type="Proteomes" id="UP000005640">
    <property type="component" value="Unplaced"/>
</dbReference>
<dbReference type="RNAct" id="B1AK76">
    <property type="molecule type" value="protein"/>
</dbReference>
<dbReference type="GO" id="GO:0016607">
    <property type="term" value="C:nuclear speck"/>
    <property type="evidence" value="ECO:0000318"/>
    <property type="project" value="GO_Central"/>
</dbReference>
<dbReference type="InterPro" id="IPR009847">
    <property type="entry name" value="SNURF"/>
</dbReference>
<dbReference type="PANTHER" id="PTHR14508">
    <property type="entry name" value="SNRPN UPSTREAM READING FRAME PROTEIN, SNURF"/>
    <property type="match status" value="1"/>
</dbReference>
<dbReference type="PANTHER" id="PTHR14508:SF2">
    <property type="entry name" value="SNRPN UPSTREAM READING FRAME PROTEIN-RELATED"/>
    <property type="match status" value="1"/>
</dbReference>
<dbReference type="Pfam" id="PF07192">
    <property type="entry name" value="SNURF"/>
    <property type="match status" value="1"/>
</dbReference>
<comment type="similarity">
    <text evidence="1">Belongs to the SNURF family.</text>
</comment>
<comment type="caution">
    <text evidence="1">Could be the product of a pseudogene.</text>
</comment>
<feature type="chain" id="PRO_0000340268" description="Putative SNURF-like protein">
    <location>
        <begin position="1"/>
        <end position="121"/>
    </location>
</feature>
<accession>B1AK76</accession>
<sequence>MEQARDHLHLRWTTEQHMPEVEVQVKYRTAALSNQECQLYLRHSQQQQVLVVDFQAKLRQVFITETPRCGKKPYWNNEEAESKQNPGSIYCLLLLIRGGMSDSLIKREISNFEIVSKNKKN</sequence>
<gene>
    <name type="primary">SNURFL</name>
    <name type="synonym">CXorf19</name>
</gene>
<name>SNUFL_HUMAN</name>
<proteinExistence type="uncertain"/>
<keyword id="KW-1185">Reference proteome</keyword>
<organism>
    <name type="scientific">Homo sapiens</name>
    <name type="common">Human</name>
    <dbReference type="NCBI Taxonomy" id="9606"/>
    <lineage>
        <taxon>Eukaryota</taxon>
        <taxon>Metazoa</taxon>
        <taxon>Chordata</taxon>
        <taxon>Craniata</taxon>
        <taxon>Vertebrata</taxon>
        <taxon>Euteleostomi</taxon>
        <taxon>Mammalia</taxon>
        <taxon>Eutheria</taxon>
        <taxon>Euarchontoglires</taxon>
        <taxon>Primates</taxon>
        <taxon>Haplorrhini</taxon>
        <taxon>Catarrhini</taxon>
        <taxon>Hominidae</taxon>
        <taxon>Homo</taxon>
    </lineage>
</organism>